<keyword id="KW-0067">ATP-binding</keyword>
<keyword id="KW-0460">Magnesium</keyword>
<keyword id="KW-0464">Manganese</keyword>
<keyword id="KW-0479">Metal-binding</keyword>
<keyword id="KW-0547">Nucleotide-binding</keyword>
<keyword id="KW-0548">Nucleotidyltransferase</keyword>
<keyword id="KW-1185">Reference proteome</keyword>
<keyword id="KW-0808">Transferase</keyword>
<proteinExistence type="inferred from homology"/>
<gene>
    <name evidence="1" type="primary">ydiU</name>
    <name evidence="1" type="synonym">selO</name>
    <name type="ordered locus">GK0436</name>
</gene>
<comment type="function">
    <text evidence="1">Nucleotidyltransferase involved in the post-translational modification of proteins. It can catalyze the addition of adenosine monophosphate (AMP) or uridine monophosphate (UMP) to a protein, resulting in modifications known as AMPylation and UMPylation.</text>
</comment>
<comment type="catalytic activity">
    <reaction evidence="1">
        <text>L-seryl-[protein] + ATP = 3-O-(5'-adenylyl)-L-seryl-[protein] + diphosphate</text>
        <dbReference type="Rhea" id="RHEA:58120"/>
        <dbReference type="Rhea" id="RHEA-COMP:9863"/>
        <dbReference type="Rhea" id="RHEA-COMP:15073"/>
        <dbReference type="ChEBI" id="CHEBI:29999"/>
        <dbReference type="ChEBI" id="CHEBI:30616"/>
        <dbReference type="ChEBI" id="CHEBI:33019"/>
        <dbReference type="ChEBI" id="CHEBI:142516"/>
        <dbReference type="EC" id="2.7.7.108"/>
    </reaction>
</comment>
<comment type="catalytic activity">
    <reaction evidence="1">
        <text>L-threonyl-[protein] + ATP = 3-O-(5'-adenylyl)-L-threonyl-[protein] + diphosphate</text>
        <dbReference type="Rhea" id="RHEA:54292"/>
        <dbReference type="Rhea" id="RHEA-COMP:11060"/>
        <dbReference type="Rhea" id="RHEA-COMP:13847"/>
        <dbReference type="ChEBI" id="CHEBI:30013"/>
        <dbReference type="ChEBI" id="CHEBI:30616"/>
        <dbReference type="ChEBI" id="CHEBI:33019"/>
        <dbReference type="ChEBI" id="CHEBI:138113"/>
        <dbReference type="EC" id="2.7.7.108"/>
    </reaction>
</comment>
<comment type="catalytic activity">
    <reaction evidence="1">
        <text>L-tyrosyl-[protein] + ATP = O-(5'-adenylyl)-L-tyrosyl-[protein] + diphosphate</text>
        <dbReference type="Rhea" id="RHEA:54288"/>
        <dbReference type="Rhea" id="RHEA-COMP:10136"/>
        <dbReference type="Rhea" id="RHEA-COMP:13846"/>
        <dbReference type="ChEBI" id="CHEBI:30616"/>
        <dbReference type="ChEBI" id="CHEBI:33019"/>
        <dbReference type="ChEBI" id="CHEBI:46858"/>
        <dbReference type="ChEBI" id="CHEBI:83624"/>
        <dbReference type="EC" id="2.7.7.108"/>
    </reaction>
</comment>
<comment type="catalytic activity">
    <reaction evidence="1">
        <text>L-histidyl-[protein] + UTP = N(tele)-(5'-uridylyl)-L-histidyl-[protein] + diphosphate</text>
        <dbReference type="Rhea" id="RHEA:83891"/>
        <dbReference type="Rhea" id="RHEA-COMP:9745"/>
        <dbReference type="Rhea" id="RHEA-COMP:20239"/>
        <dbReference type="ChEBI" id="CHEBI:29979"/>
        <dbReference type="ChEBI" id="CHEBI:33019"/>
        <dbReference type="ChEBI" id="CHEBI:46398"/>
        <dbReference type="ChEBI" id="CHEBI:233474"/>
    </reaction>
</comment>
<comment type="catalytic activity">
    <reaction evidence="1">
        <text>L-seryl-[protein] + UTP = O-(5'-uridylyl)-L-seryl-[protein] + diphosphate</text>
        <dbReference type="Rhea" id="RHEA:64604"/>
        <dbReference type="Rhea" id="RHEA-COMP:9863"/>
        <dbReference type="Rhea" id="RHEA-COMP:16635"/>
        <dbReference type="ChEBI" id="CHEBI:29999"/>
        <dbReference type="ChEBI" id="CHEBI:33019"/>
        <dbReference type="ChEBI" id="CHEBI:46398"/>
        <dbReference type="ChEBI" id="CHEBI:156051"/>
    </reaction>
</comment>
<comment type="catalytic activity">
    <reaction evidence="1">
        <text>L-tyrosyl-[protein] + UTP = O-(5'-uridylyl)-L-tyrosyl-[protein] + diphosphate</text>
        <dbReference type="Rhea" id="RHEA:83887"/>
        <dbReference type="Rhea" id="RHEA-COMP:10136"/>
        <dbReference type="Rhea" id="RHEA-COMP:20238"/>
        <dbReference type="ChEBI" id="CHEBI:33019"/>
        <dbReference type="ChEBI" id="CHEBI:46398"/>
        <dbReference type="ChEBI" id="CHEBI:46858"/>
        <dbReference type="ChEBI" id="CHEBI:90602"/>
    </reaction>
</comment>
<comment type="cofactor">
    <cofactor evidence="1">
        <name>Mg(2+)</name>
        <dbReference type="ChEBI" id="CHEBI:18420"/>
    </cofactor>
    <cofactor evidence="1">
        <name>Mn(2+)</name>
        <dbReference type="ChEBI" id="CHEBI:29035"/>
    </cofactor>
</comment>
<comment type="similarity">
    <text evidence="1">Belongs to the SELO family.</text>
</comment>
<feature type="chain" id="PRO_0000271828" description="Protein nucleotidyltransferase YdiU">
    <location>
        <begin position="1"/>
        <end position="484"/>
    </location>
</feature>
<feature type="region of interest" description="Disordered" evidence="2">
    <location>
        <begin position="463"/>
        <end position="484"/>
    </location>
</feature>
<feature type="active site" description="Proton acceptor" evidence="1">
    <location>
        <position position="249"/>
    </location>
</feature>
<feature type="binding site" evidence="1">
    <location>
        <position position="87"/>
    </location>
    <ligand>
        <name>ATP</name>
        <dbReference type="ChEBI" id="CHEBI:30616"/>
    </ligand>
</feature>
<feature type="binding site" evidence="1">
    <location>
        <position position="89"/>
    </location>
    <ligand>
        <name>ATP</name>
        <dbReference type="ChEBI" id="CHEBI:30616"/>
    </ligand>
</feature>
<feature type="binding site" evidence="1">
    <location>
        <position position="90"/>
    </location>
    <ligand>
        <name>ATP</name>
        <dbReference type="ChEBI" id="CHEBI:30616"/>
    </ligand>
</feature>
<feature type="binding site" evidence="1">
    <location>
        <position position="110"/>
    </location>
    <ligand>
        <name>ATP</name>
        <dbReference type="ChEBI" id="CHEBI:30616"/>
    </ligand>
</feature>
<feature type="binding site" evidence="1">
    <location>
        <position position="122"/>
    </location>
    <ligand>
        <name>ATP</name>
        <dbReference type="ChEBI" id="CHEBI:30616"/>
    </ligand>
</feature>
<feature type="binding site" evidence="1">
    <location>
        <position position="123"/>
    </location>
    <ligand>
        <name>ATP</name>
        <dbReference type="ChEBI" id="CHEBI:30616"/>
    </ligand>
</feature>
<feature type="binding site" evidence="1">
    <location>
        <position position="173"/>
    </location>
    <ligand>
        <name>ATP</name>
        <dbReference type="ChEBI" id="CHEBI:30616"/>
    </ligand>
</feature>
<feature type="binding site" evidence="1">
    <location>
        <position position="180"/>
    </location>
    <ligand>
        <name>ATP</name>
        <dbReference type="ChEBI" id="CHEBI:30616"/>
    </ligand>
</feature>
<feature type="binding site" evidence="1">
    <location>
        <position position="250"/>
    </location>
    <ligand>
        <name>Mg(2+)</name>
        <dbReference type="ChEBI" id="CHEBI:18420"/>
    </ligand>
</feature>
<feature type="binding site" evidence="1">
    <location>
        <position position="259"/>
    </location>
    <ligand>
        <name>ATP</name>
        <dbReference type="ChEBI" id="CHEBI:30616"/>
    </ligand>
</feature>
<feature type="binding site" evidence="1">
    <location>
        <position position="259"/>
    </location>
    <ligand>
        <name>Mg(2+)</name>
        <dbReference type="ChEBI" id="CHEBI:18420"/>
    </ligand>
</feature>
<reference key="1">
    <citation type="journal article" date="2004" name="Nucleic Acids Res.">
        <title>Thermoadaptation trait revealed by the genome sequence of thermophilic Geobacillus kaustophilus.</title>
        <authorList>
            <person name="Takami H."/>
            <person name="Takaki Y."/>
            <person name="Chee G.-J."/>
            <person name="Nishi S."/>
            <person name="Shimamura S."/>
            <person name="Suzuki H."/>
            <person name="Matsui S."/>
            <person name="Uchiyama I."/>
        </authorList>
    </citation>
    <scope>NUCLEOTIDE SEQUENCE [LARGE SCALE GENOMIC DNA]</scope>
    <source>
        <strain>HTA426</strain>
    </source>
</reference>
<sequence length="484" mass="54363">MDAGWKFDNSYARLPERFFSKVLPTPVRAPKLAVLNRSLAVKLGLNEEALRSEDGVAVFGGNQIPGGAEPLAQAYAGHQFGYFTMLGDGRAVLLGEHVTPSGERVDIQLKGSGRTPYSRGGDGRAALGPMLREYIVSEAMHALGIPTTRSLAVVTTGETIMRETELPGAVLTRVASSHLRVGTFQYAAQWGTIEELRALADYALWRHFPGFEEAENRYLFLLEQVIERQAELIAKWQLVGFVHGVMNTDNMTISGETIDYGPCAFMDTYSLETVFSSIDTEGRYAYGNQPYIGGWNLARFAESLLPLLDENEEKAIALAQGALDEYPKRYHHHWLSGMRAKLGLAEEQEGDQELIADLLRLMEAHRADYTNTFRALTLGEYTGMALFDSAEFREWQERWQTRLSQESVSREEAYERMRRHNPAVIPRNHRVEEALAAAVHDGDYSVMERFLEALSDPYAYSPEQEKYAELPPPSDRPYRTFCGT</sequence>
<evidence type="ECO:0000255" key="1">
    <source>
        <dbReference type="HAMAP-Rule" id="MF_00692"/>
    </source>
</evidence>
<evidence type="ECO:0000256" key="2">
    <source>
        <dbReference type="SAM" id="MobiDB-lite"/>
    </source>
</evidence>
<organism>
    <name type="scientific">Geobacillus kaustophilus (strain HTA426)</name>
    <dbReference type="NCBI Taxonomy" id="235909"/>
    <lineage>
        <taxon>Bacteria</taxon>
        <taxon>Bacillati</taxon>
        <taxon>Bacillota</taxon>
        <taxon>Bacilli</taxon>
        <taxon>Bacillales</taxon>
        <taxon>Anoxybacillaceae</taxon>
        <taxon>Geobacillus</taxon>
        <taxon>Geobacillus thermoleovorans group</taxon>
    </lineage>
</organism>
<dbReference type="EC" id="2.7.7.-" evidence="1"/>
<dbReference type="EC" id="2.7.7.108" evidence="1"/>
<dbReference type="EMBL" id="BA000043">
    <property type="protein sequence ID" value="BAD74721.1"/>
    <property type="molecule type" value="Genomic_DNA"/>
</dbReference>
<dbReference type="SMR" id="Q5L2V9"/>
<dbReference type="STRING" id="235909.GK0436"/>
<dbReference type="KEGG" id="gka:GK0436"/>
<dbReference type="eggNOG" id="COG0397">
    <property type="taxonomic scope" value="Bacteria"/>
</dbReference>
<dbReference type="HOGENOM" id="CLU_010245_4_1_9"/>
<dbReference type="Proteomes" id="UP000001172">
    <property type="component" value="Chromosome"/>
</dbReference>
<dbReference type="GO" id="GO:0070733">
    <property type="term" value="F:AMPylase activity"/>
    <property type="evidence" value="ECO:0007669"/>
    <property type="project" value="TreeGrafter"/>
</dbReference>
<dbReference type="GO" id="GO:0005524">
    <property type="term" value="F:ATP binding"/>
    <property type="evidence" value="ECO:0007669"/>
    <property type="project" value="UniProtKB-UniRule"/>
</dbReference>
<dbReference type="GO" id="GO:0000287">
    <property type="term" value="F:magnesium ion binding"/>
    <property type="evidence" value="ECO:0007669"/>
    <property type="project" value="UniProtKB-UniRule"/>
</dbReference>
<dbReference type="HAMAP" id="MF_00692">
    <property type="entry name" value="YdiU_SelO"/>
    <property type="match status" value="1"/>
</dbReference>
<dbReference type="InterPro" id="IPR003846">
    <property type="entry name" value="SelO"/>
</dbReference>
<dbReference type="NCBIfam" id="NF000658">
    <property type="entry name" value="PRK00029.1"/>
    <property type="match status" value="1"/>
</dbReference>
<dbReference type="PANTHER" id="PTHR32057">
    <property type="entry name" value="PROTEIN ADENYLYLTRANSFERASE SELO, MITOCHONDRIAL"/>
    <property type="match status" value="1"/>
</dbReference>
<dbReference type="PANTHER" id="PTHR32057:SF14">
    <property type="entry name" value="PROTEIN ADENYLYLTRANSFERASE SELO, MITOCHONDRIAL"/>
    <property type="match status" value="1"/>
</dbReference>
<dbReference type="Pfam" id="PF02696">
    <property type="entry name" value="SelO"/>
    <property type="match status" value="1"/>
</dbReference>
<accession>Q5L2V9</accession>
<name>SELO_GEOKA</name>
<protein>
    <recommendedName>
        <fullName evidence="1">Protein nucleotidyltransferase YdiU</fullName>
        <ecNumber evidence="1">2.7.7.-</ecNumber>
    </recommendedName>
    <alternativeName>
        <fullName evidence="1">Protein adenylyltransferase YdiU</fullName>
        <ecNumber evidence="1">2.7.7.108</ecNumber>
    </alternativeName>
    <alternativeName>
        <fullName evidence="1">Protein uridylyltransferase YdiU</fullName>
        <ecNumber evidence="1">2.7.7.-</ecNumber>
    </alternativeName>
</protein>